<keyword id="KW-0028">Amino-acid biosynthesis</keyword>
<keyword id="KW-0963">Cytoplasm</keyword>
<keyword id="KW-0368">Histidine biosynthesis</keyword>
<keyword id="KW-0456">Lyase</keyword>
<keyword id="KW-1185">Reference proteome</keyword>
<proteinExistence type="inferred from homology"/>
<reference key="1">
    <citation type="journal article" date="2010" name="PLoS ONE">
        <title>The complete genome sequence of Cupriavidus metallidurans strain CH34, a master survivalist in harsh and anthropogenic environments.</title>
        <authorList>
            <person name="Janssen P.J."/>
            <person name="Van Houdt R."/>
            <person name="Moors H."/>
            <person name="Monsieurs P."/>
            <person name="Morin N."/>
            <person name="Michaux A."/>
            <person name="Benotmane M.A."/>
            <person name="Leys N."/>
            <person name="Vallaeys T."/>
            <person name="Lapidus A."/>
            <person name="Monchy S."/>
            <person name="Medigue C."/>
            <person name="Taghavi S."/>
            <person name="McCorkle S."/>
            <person name="Dunn J."/>
            <person name="van der Lelie D."/>
            <person name="Mergeay M."/>
        </authorList>
    </citation>
    <scope>NUCLEOTIDE SEQUENCE [LARGE SCALE GENOMIC DNA]</scope>
    <source>
        <strain>ATCC 43123 / DSM 2839 / NBRC 102507 / CH34</strain>
    </source>
</reference>
<organism>
    <name type="scientific">Cupriavidus metallidurans (strain ATCC 43123 / DSM 2839 / NBRC 102507 / CH34)</name>
    <name type="common">Ralstonia metallidurans</name>
    <dbReference type="NCBI Taxonomy" id="266264"/>
    <lineage>
        <taxon>Bacteria</taxon>
        <taxon>Pseudomonadati</taxon>
        <taxon>Pseudomonadota</taxon>
        <taxon>Betaproteobacteria</taxon>
        <taxon>Burkholderiales</taxon>
        <taxon>Burkholderiaceae</taxon>
        <taxon>Cupriavidus</taxon>
    </lineage>
</organism>
<comment type="catalytic activity">
    <reaction evidence="1">
        <text>D-erythro-1-(imidazol-4-yl)glycerol 3-phosphate = 3-(imidazol-4-yl)-2-oxopropyl phosphate + H2O</text>
        <dbReference type="Rhea" id="RHEA:11040"/>
        <dbReference type="ChEBI" id="CHEBI:15377"/>
        <dbReference type="ChEBI" id="CHEBI:57766"/>
        <dbReference type="ChEBI" id="CHEBI:58278"/>
        <dbReference type="EC" id="4.2.1.19"/>
    </reaction>
</comment>
<comment type="pathway">
    <text evidence="1">Amino-acid biosynthesis; L-histidine biosynthesis; L-histidine from 5-phospho-alpha-D-ribose 1-diphosphate: step 6/9.</text>
</comment>
<comment type="subcellular location">
    <subcellularLocation>
        <location evidence="1">Cytoplasm</location>
    </subcellularLocation>
</comment>
<comment type="similarity">
    <text evidence="1">Belongs to the imidazoleglycerol-phosphate dehydratase family.</text>
</comment>
<protein>
    <recommendedName>
        <fullName evidence="1">Imidazoleglycerol-phosphate dehydratase</fullName>
        <shortName evidence="1">IGPD</shortName>
        <ecNumber evidence="1">4.2.1.19</ecNumber>
    </recommendedName>
</protein>
<evidence type="ECO:0000255" key="1">
    <source>
        <dbReference type="HAMAP-Rule" id="MF_00076"/>
    </source>
</evidence>
<name>HIS7_CUPMC</name>
<gene>
    <name evidence="1" type="primary">hisB</name>
    <name type="ordered locus">Rmet_3246</name>
</gene>
<feature type="chain" id="PRO_1000010340" description="Imidazoleglycerol-phosphate dehydratase">
    <location>
        <begin position="1"/>
        <end position="195"/>
    </location>
</feature>
<dbReference type="EC" id="4.2.1.19" evidence="1"/>
<dbReference type="EMBL" id="CP000352">
    <property type="protein sequence ID" value="ABF10118.1"/>
    <property type="molecule type" value="Genomic_DNA"/>
</dbReference>
<dbReference type="RefSeq" id="WP_011517721.1">
    <property type="nucleotide sequence ID" value="NC_007973.1"/>
</dbReference>
<dbReference type="SMR" id="Q1LIA8"/>
<dbReference type="STRING" id="266264.Rmet_3246"/>
<dbReference type="KEGG" id="rme:Rmet_3246"/>
<dbReference type="eggNOG" id="COG0131">
    <property type="taxonomic scope" value="Bacteria"/>
</dbReference>
<dbReference type="HOGENOM" id="CLU_044308_2_0_4"/>
<dbReference type="UniPathway" id="UPA00031">
    <property type="reaction ID" value="UER00011"/>
</dbReference>
<dbReference type="Proteomes" id="UP000002429">
    <property type="component" value="Chromosome"/>
</dbReference>
<dbReference type="GO" id="GO:0005737">
    <property type="term" value="C:cytoplasm"/>
    <property type="evidence" value="ECO:0007669"/>
    <property type="project" value="UniProtKB-SubCell"/>
</dbReference>
<dbReference type="GO" id="GO:0004424">
    <property type="term" value="F:imidazoleglycerol-phosphate dehydratase activity"/>
    <property type="evidence" value="ECO:0007669"/>
    <property type="project" value="UniProtKB-UniRule"/>
</dbReference>
<dbReference type="GO" id="GO:0000105">
    <property type="term" value="P:L-histidine biosynthetic process"/>
    <property type="evidence" value="ECO:0007669"/>
    <property type="project" value="UniProtKB-UniRule"/>
</dbReference>
<dbReference type="CDD" id="cd07914">
    <property type="entry name" value="IGPD"/>
    <property type="match status" value="1"/>
</dbReference>
<dbReference type="FunFam" id="3.30.230.40:FF:000002">
    <property type="entry name" value="Imidazoleglycerol-phosphate dehydratase"/>
    <property type="match status" value="1"/>
</dbReference>
<dbReference type="FunFam" id="3.30.230.40:FF:000003">
    <property type="entry name" value="Imidazoleglycerol-phosphate dehydratase HisB"/>
    <property type="match status" value="1"/>
</dbReference>
<dbReference type="Gene3D" id="3.30.230.40">
    <property type="entry name" value="Imidazole glycerol phosphate dehydratase, domain 1"/>
    <property type="match status" value="2"/>
</dbReference>
<dbReference type="HAMAP" id="MF_00076">
    <property type="entry name" value="HisB"/>
    <property type="match status" value="1"/>
</dbReference>
<dbReference type="InterPro" id="IPR038494">
    <property type="entry name" value="IGPD_sf"/>
</dbReference>
<dbReference type="InterPro" id="IPR000807">
    <property type="entry name" value="ImidazoleglycerolP_deHydtase"/>
</dbReference>
<dbReference type="InterPro" id="IPR020565">
    <property type="entry name" value="ImidazoleglycerP_deHydtase_CS"/>
</dbReference>
<dbReference type="InterPro" id="IPR020568">
    <property type="entry name" value="Ribosomal_Su5_D2-typ_SF"/>
</dbReference>
<dbReference type="NCBIfam" id="NF002106">
    <property type="entry name" value="PRK00951.1-1"/>
    <property type="match status" value="1"/>
</dbReference>
<dbReference type="NCBIfam" id="NF002109">
    <property type="entry name" value="PRK00951.1-5"/>
    <property type="match status" value="1"/>
</dbReference>
<dbReference type="NCBIfam" id="NF002111">
    <property type="entry name" value="PRK00951.2-1"/>
    <property type="match status" value="1"/>
</dbReference>
<dbReference type="NCBIfam" id="NF002114">
    <property type="entry name" value="PRK00951.2-4"/>
    <property type="match status" value="1"/>
</dbReference>
<dbReference type="PANTHER" id="PTHR23133:SF2">
    <property type="entry name" value="IMIDAZOLEGLYCEROL-PHOSPHATE DEHYDRATASE"/>
    <property type="match status" value="1"/>
</dbReference>
<dbReference type="PANTHER" id="PTHR23133">
    <property type="entry name" value="IMIDAZOLEGLYCEROL-PHOSPHATE DEHYDRATASE HIS7"/>
    <property type="match status" value="1"/>
</dbReference>
<dbReference type="Pfam" id="PF00475">
    <property type="entry name" value="IGPD"/>
    <property type="match status" value="1"/>
</dbReference>
<dbReference type="SUPFAM" id="SSF54211">
    <property type="entry name" value="Ribosomal protein S5 domain 2-like"/>
    <property type="match status" value="2"/>
</dbReference>
<dbReference type="PROSITE" id="PS00954">
    <property type="entry name" value="IGP_DEHYDRATASE_1"/>
    <property type="match status" value="1"/>
</dbReference>
<dbReference type="PROSITE" id="PS00955">
    <property type="entry name" value="IGP_DEHYDRATASE_2"/>
    <property type="match status" value="1"/>
</dbReference>
<sequence>MRVAEVTRNTSETQIRVSLNLDGTGRQKLASGVPFLDHMLDQIARHGMFDLEVEATGDTHIDDHHTVEDVGITLGQAVARAIGDKKGITRYGHSYVPLDECLSRVVIDFSGRPGLEFHVPFTRARVGSFDVDLTIEFFRGFVNHAGVTLHIDNIRGINAHHQCETVFKAFGRALRMAVELDPRAANTIPSTKGTL</sequence>
<accession>Q1LIA8</accession>